<reference key="1">
    <citation type="submission" date="2009-06" db="EMBL/GenBank/DDBJ databases">
        <title>Complete sequence of chromosome of Geopacillus sp. WCH70.</title>
        <authorList>
            <consortium name="US DOE Joint Genome Institute"/>
            <person name="Lucas S."/>
            <person name="Copeland A."/>
            <person name="Lapidus A."/>
            <person name="Glavina del Rio T."/>
            <person name="Dalin E."/>
            <person name="Tice H."/>
            <person name="Bruce D."/>
            <person name="Goodwin L."/>
            <person name="Pitluck S."/>
            <person name="Chertkov O."/>
            <person name="Brettin T."/>
            <person name="Detter J.C."/>
            <person name="Han C."/>
            <person name="Larimer F."/>
            <person name="Land M."/>
            <person name="Hauser L."/>
            <person name="Kyrpides N."/>
            <person name="Mikhailova N."/>
            <person name="Brumm P."/>
            <person name="Mead D.A."/>
            <person name="Richardson P."/>
        </authorList>
    </citation>
    <scope>NUCLEOTIDE SEQUENCE [LARGE SCALE GENOMIC DNA]</scope>
    <source>
        <strain>WCH70</strain>
    </source>
</reference>
<comment type="function">
    <text evidence="1">Catalyzes the reversible reaction in which hydroxymethyl group from 5,10-methylenetetrahydrofolate is transferred onto alpha-ketoisovalerate to form ketopantoate.</text>
</comment>
<comment type="catalytic activity">
    <reaction evidence="1">
        <text>3-methyl-2-oxobutanoate + (6R)-5,10-methylene-5,6,7,8-tetrahydrofolate + H2O = 2-dehydropantoate + (6S)-5,6,7,8-tetrahydrofolate</text>
        <dbReference type="Rhea" id="RHEA:11824"/>
        <dbReference type="ChEBI" id="CHEBI:11561"/>
        <dbReference type="ChEBI" id="CHEBI:11851"/>
        <dbReference type="ChEBI" id="CHEBI:15377"/>
        <dbReference type="ChEBI" id="CHEBI:15636"/>
        <dbReference type="ChEBI" id="CHEBI:57453"/>
        <dbReference type="EC" id="2.1.2.11"/>
    </reaction>
</comment>
<comment type="cofactor">
    <cofactor evidence="1">
        <name>Mg(2+)</name>
        <dbReference type="ChEBI" id="CHEBI:18420"/>
    </cofactor>
    <text evidence="1">Binds 1 Mg(2+) ion per subunit.</text>
</comment>
<comment type="pathway">
    <text evidence="1">Cofactor biosynthesis; (R)-pantothenate biosynthesis; (R)-pantoate from 3-methyl-2-oxobutanoate: step 1/2.</text>
</comment>
<comment type="subunit">
    <text evidence="1">Homodecamer; pentamer of dimers.</text>
</comment>
<comment type="subcellular location">
    <subcellularLocation>
        <location evidence="1">Cytoplasm</location>
    </subcellularLocation>
</comment>
<comment type="similarity">
    <text evidence="1">Belongs to the PanB family.</text>
</comment>
<evidence type="ECO:0000255" key="1">
    <source>
        <dbReference type="HAMAP-Rule" id="MF_00156"/>
    </source>
</evidence>
<accession>C5D3B3</accession>
<proteinExistence type="inferred from homology"/>
<sequence>MKTKTDFFKMKQENEPIVMLTAYDFPSAKLAEAAGVDMILVGDSLGMVVLGYDSTIPVTVEDMIHHTKAVRRGAPNTFIVTDMPFMSYHLSMEEALRNAQRIMQESGANAVKVEGADDVVNVIRAFTKAGVPVVAHLGLTPQSVGVLGGYKVQGKDAESARKLIEDAKLCEEAGAIALVLECVPKQIAAEITKQLTIPTIGIGAGDEVDGQVLVYHDVLGYGVDRVPKFVKKYANIQETISHALANYIADVKLRQFPEATHMFTMKEEEWIALYGGKRT</sequence>
<organism>
    <name type="scientific">Geobacillus sp. (strain WCH70)</name>
    <dbReference type="NCBI Taxonomy" id="471223"/>
    <lineage>
        <taxon>Bacteria</taxon>
        <taxon>Bacillati</taxon>
        <taxon>Bacillota</taxon>
        <taxon>Bacilli</taxon>
        <taxon>Bacillales</taxon>
        <taxon>Anoxybacillaceae</taxon>
        <taxon>Geobacillus</taxon>
    </lineage>
</organism>
<name>PANB_GEOSW</name>
<keyword id="KW-0963">Cytoplasm</keyword>
<keyword id="KW-0460">Magnesium</keyword>
<keyword id="KW-0479">Metal-binding</keyword>
<keyword id="KW-0566">Pantothenate biosynthesis</keyword>
<keyword id="KW-0808">Transferase</keyword>
<protein>
    <recommendedName>
        <fullName evidence="1">3-methyl-2-oxobutanoate hydroxymethyltransferase</fullName>
        <ecNumber evidence="1">2.1.2.11</ecNumber>
    </recommendedName>
    <alternativeName>
        <fullName evidence="1">Ketopantoate hydroxymethyltransferase</fullName>
        <shortName evidence="1">KPHMT</shortName>
    </alternativeName>
</protein>
<gene>
    <name evidence="1" type="primary">panB</name>
    <name type="ordered locus">GWCH70_2118</name>
</gene>
<dbReference type="EC" id="2.1.2.11" evidence="1"/>
<dbReference type="EMBL" id="CP001638">
    <property type="protein sequence ID" value="ACS24828.1"/>
    <property type="molecule type" value="Genomic_DNA"/>
</dbReference>
<dbReference type="SMR" id="C5D3B3"/>
<dbReference type="STRING" id="471223.GWCH70_2118"/>
<dbReference type="KEGG" id="gwc:GWCH70_2118"/>
<dbReference type="eggNOG" id="COG0413">
    <property type="taxonomic scope" value="Bacteria"/>
</dbReference>
<dbReference type="HOGENOM" id="CLU_036645_1_0_9"/>
<dbReference type="OrthoDB" id="9781789at2"/>
<dbReference type="UniPathway" id="UPA00028">
    <property type="reaction ID" value="UER00003"/>
</dbReference>
<dbReference type="GO" id="GO:0005737">
    <property type="term" value="C:cytoplasm"/>
    <property type="evidence" value="ECO:0007669"/>
    <property type="project" value="UniProtKB-SubCell"/>
</dbReference>
<dbReference type="GO" id="GO:0003864">
    <property type="term" value="F:3-methyl-2-oxobutanoate hydroxymethyltransferase activity"/>
    <property type="evidence" value="ECO:0007669"/>
    <property type="project" value="UniProtKB-UniRule"/>
</dbReference>
<dbReference type="GO" id="GO:0000287">
    <property type="term" value="F:magnesium ion binding"/>
    <property type="evidence" value="ECO:0007669"/>
    <property type="project" value="TreeGrafter"/>
</dbReference>
<dbReference type="GO" id="GO:0015940">
    <property type="term" value="P:pantothenate biosynthetic process"/>
    <property type="evidence" value="ECO:0007669"/>
    <property type="project" value="UniProtKB-UniRule"/>
</dbReference>
<dbReference type="CDD" id="cd06557">
    <property type="entry name" value="KPHMT-like"/>
    <property type="match status" value="1"/>
</dbReference>
<dbReference type="FunFam" id="3.20.20.60:FF:000003">
    <property type="entry name" value="3-methyl-2-oxobutanoate hydroxymethyltransferase"/>
    <property type="match status" value="1"/>
</dbReference>
<dbReference type="Gene3D" id="3.20.20.60">
    <property type="entry name" value="Phosphoenolpyruvate-binding domains"/>
    <property type="match status" value="1"/>
</dbReference>
<dbReference type="HAMAP" id="MF_00156">
    <property type="entry name" value="PanB"/>
    <property type="match status" value="1"/>
</dbReference>
<dbReference type="InterPro" id="IPR003700">
    <property type="entry name" value="Pantoate_hydroxy_MeTrfase"/>
</dbReference>
<dbReference type="InterPro" id="IPR015813">
    <property type="entry name" value="Pyrv/PenolPyrv_kinase-like_dom"/>
</dbReference>
<dbReference type="InterPro" id="IPR040442">
    <property type="entry name" value="Pyrv_kinase-like_dom_sf"/>
</dbReference>
<dbReference type="NCBIfam" id="TIGR00222">
    <property type="entry name" value="panB"/>
    <property type="match status" value="1"/>
</dbReference>
<dbReference type="NCBIfam" id="NF001452">
    <property type="entry name" value="PRK00311.1"/>
    <property type="match status" value="1"/>
</dbReference>
<dbReference type="PANTHER" id="PTHR20881">
    <property type="entry name" value="3-METHYL-2-OXOBUTANOATE HYDROXYMETHYLTRANSFERASE"/>
    <property type="match status" value="1"/>
</dbReference>
<dbReference type="PANTHER" id="PTHR20881:SF0">
    <property type="entry name" value="3-METHYL-2-OXOBUTANOATE HYDROXYMETHYLTRANSFERASE"/>
    <property type="match status" value="1"/>
</dbReference>
<dbReference type="Pfam" id="PF02548">
    <property type="entry name" value="Pantoate_transf"/>
    <property type="match status" value="1"/>
</dbReference>
<dbReference type="PIRSF" id="PIRSF000388">
    <property type="entry name" value="Pantoate_hydroxy_MeTrfase"/>
    <property type="match status" value="1"/>
</dbReference>
<dbReference type="SUPFAM" id="SSF51621">
    <property type="entry name" value="Phosphoenolpyruvate/pyruvate domain"/>
    <property type="match status" value="1"/>
</dbReference>
<feature type="chain" id="PRO_1000203473" description="3-methyl-2-oxobutanoate hydroxymethyltransferase">
    <location>
        <begin position="1"/>
        <end position="279"/>
    </location>
</feature>
<feature type="active site" description="Proton acceptor" evidence="1">
    <location>
        <position position="181"/>
    </location>
</feature>
<feature type="binding site" evidence="1">
    <location>
        <begin position="43"/>
        <end position="44"/>
    </location>
    <ligand>
        <name>3-methyl-2-oxobutanoate</name>
        <dbReference type="ChEBI" id="CHEBI:11851"/>
    </ligand>
</feature>
<feature type="binding site" evidence="1">
    <location>
        <position position="43"/>
    </location>
    <ligand>
        <name>Mg(2+)</name>
        <dbReference type="ChEBI" id="CHEBI:18420"/>
    </ligand>
</feature>
<feature type="binding site" evidence="1">
    <location>
        <position position="82"/>
    </location>
    <ligand>
        <name>3-methyl-2-oxobutanoate</name>
        <dbReference type="ChEBI" id="CHEBI:11851"/>
    </ligand>
</feature>
<feature type="binding site" evidence="1">
    <location>
        <position position="82"/>
    </location>
    <ligand>
        <name>Mg(2+)</name>
        <dbReference type="ChEBI" id="CHEBI:18420"/>
    </ligand>
</feature>
<feature type="binding site" evidence="1">
    <location>
        <position position="112"/>
    </location>
    <ligand>
        <name>3-methyl-2-oxobutanoate</name>
        <dbReference type="ChEBI" id="CHEBI:11851"/>
    </ligand>
</feature>
<feature type="binding site" evidence="1">
    <location>
        <position position="114"/>
    </location>
    <ligand>
        <name>Mg(2+)</name>
        <dbReference type="ChEBI" id="CHEBI:18420"/>
    </ligand>
</feature>